<accession>A2SLS6</accession>
<name>ALR_METPP</name>
<organism>
    <name type="scientific">Methylibium petroleiphilum (strain ATCC BAA-1232 / LMG 22953 / PM1)</name>
    <dbReference type="NCBI Taxonomy" id="420662"/>
    <lineage>
        <taxon>Bacteria</taxon>
        <taxon>Pseudomonadati</taxon>
        <taxon>Pseudomonadota</taxon>
        <taxon>Betaproteobacteria</taxon>
        <taxon>Burkholderiales</taxon>
        <taxon>Sphaerotilaceae</taxon>
        <taxon>Methylibium</taxon>
    </lineage>
</organism>
<dbReference type="EC" id="5.1.1.1" evidence="1"/>
<dbReference type="EMBL" id="CP000555">
    <property type="protein sequence ID" value="ABM96515.1"/>
    <property type="molecule type" value="Genomic_DNA"/>
</dbReference>
<dbReference type="RefSeq" id="WP_011831135.1">
    <property type="nucleotide sequence ID" value="NC_008825.1"/>
</dbReference>
<dbReference type="SMR" id="A2SLS6"/>
<dbReference type="STRING" id="420662.Mpe_A3562"/>
<dbReference type="KEGG" id="mpt:Mpe_A3562"/>
<dbReference type="eggNOG" id="COG0787">
    <property type="taxonomic scope" value="Bacteria"/>
</dbReference>
<dbReference type="HOGENOM" id="CLU_028393_1_0_4"/>
<dbReference type="UniPathway" id="UPA00042">
    <property type="reaction ID" value="UER00497"/>
</dbReference>
<dbReference type="Proteomes" id="UP000000366">
    <property type="component" value="Chromosome"/>
</dbReference>
<dbReference type="GO" id="GO:0005829">
    <property type="term" value="C:cytosol"/>
    <property type="evidence" value="ECO:0007669"/>
    <property type="project" value="TreeGrafter"/>
</dbReference>
<dbReference type="GO" id="GO:0008784">
    <property type="term" value="F:alanine racemase activity"/>
    <property type="evidence" value="ECO:0007669"/>
    <property type="project" value="UniProtKB-UniRule"/>
</dbReference>
<dbReference type="GO" id="GO:0030170">
    <property type="term" value="F:pyridoxal phosphate binding"/>
    <property type="evidence" value="ECO:0007669"/>
    <property type="project" value="UniProtKB-UniRule"/>
</dbReference>
<dbReference type="GO" id="GO:0030632">
    <property type="term" value="P:D-alanine biosynthetic process"/>
    <property type="evidence" value="ECO:0007669"/>
    <property type="project" value="UniProtKB-UniRule"/>
</dbReference>
<dbReference type="CDD" id="cd06827">
    <property type="entry name" value="PLPDE_III_AR_proteobact"/>
    <property type="match status" value="1"/>
</dbReference>
<dbReference type="FunFam" id="3.20.20.10:FF:000002">
    <property type="entry name" value="Alanine racemase"/>
    <property type="match status" value="1"/>
</dbReference>
<dbReference type="Gene3D" id="3.20.20.10">
    <property type="entry name" value="Alanine racemase"/>
    <property type="match status" value="1"/>
</dbReference>
<dbReference type="Gene3D" id="2.40.37.10">
    <property type="entry name" value="Lyase, Ornithine Decarboxylase, Chain A, domain 1"/>
    <property type="match status" value="1"/>
</dbReference>
<dbReference type="HAMAP" id="MF_01201">
    <property type="entry name" value="Ala_racemase"/>
    <property type="match status" value="1"/>
</dbReference>
<dbReference type="InterPro" id="IPR000821">
    <property type="entry name" value="Ala_racemase"/>
</dbReference>
<dbReference type="InterPro" id="IPR009006">
    <property type="entry name" value="Ala_racemase/Decarboxylase_C"/>
</dbReference>
<dbReference type="InterPro" id="IPR011079">
    <property type="entry name" value="Ala_racemase_C"/>
</dbReference>
<dbReference type="InterPro" id="IPR001608">
    <property type="entry name" value="Ala_racemase_N"/>
</dbReference>
<dbReference type="InterPro" id="IPR029066">
    <property type="entry name" value="PLP-binding_barrel"/>
</dbReference>
<dbReference type="NCBIfam" id="TIGR00492">
    <property type="entry name" value="alr"/>
    <property type="match status" value="1"/>
</dbReference>
<dbReference type="PANTHER" id="PTHR30511">
    <property type="entry name" value="ALANINE RACEMASE"/>
    <property type="match status" value="1"/>
</dbReference>
<dbReference type="PANTHER" id="PTHR30511:SF0">
    <property type="entry name" value="ALANINE RACEMASE, CATABOLIC-RELATED"/>
    <property type="match status" value="1"/>
</dbReference>
<dbReference type="Pfam" id="PF00842">
    <property type="entry name" value="Ala_racemase_C"/>
    <property type="match status" value="1"/>
</dbReference>
<dbReference type="Pfam" id="PF01168">
    <property type="entry name" value="Ala_racemase_N"/>
    <property type="match status" value="1"/>
</dbReference>
<dbReference type="PRINTS" id="PR00992">
    <property type="entry name" value="ALARACEMASE"/>
</dbReference>
<dbReference type="SMART" id="SM01005">
    <property type="entry name" value="Ala_racemase_C"/>
    <property type="match status" value="1"/>
</dbReference>
<dbReference type="SUPFAM" id="SSF50621">
    <property type="entry name" value="Alanine racemase C-terminal domain-like"/>
    <property type="match status" value="1"/>
</dbReference>
<dbReference type="SUPFAM" id="SSF51419">
    <property type="entry name" value="PLP-binding barrel"/>
    <property type="match status" value="1"/>
</dbReference>
<evidence type="ECO:0000255" key="1">
    <source>
        <dbReference type="HAMAP-Rule" id="MF_01201"/>
    </source>
</evidence>
<protein>
    <recommendedName>
        <fullName evidence="1">Alanine racemase</fullName>
        <ecNumber evidence="1">5.1.1.1</ecNumber>
    </recommendedName>
</protein>
<keyword id="KW-0413">Isomerase</keyword>
<keyword id="KW-0663">Pyridoxal phosphate</keyword>
<keyword id="KW-1185">Reference proteome</keyword>
<proteinExistence type="inferred from homology"/>
<sequence length="367" mass="39623">MPRPIEALIHAEALTHNLARARAAVPDARVWAVVKAHAYGHGIARVFEALRAADGFALLDLAEAQQLRDLGWRGPILLLEGVFEPRDLELCSRLNLWHTVHCEAQIDWLAMHKTHQPHRVFLKMNSGMNRLGFRPAAFRAAWTRLHALPQVDEISLMSHFSDADGGRGIAAAMQVFDDATRDLPGERSLCNSAATLRHGADAAVRADWVRAGIMLYGSAPDFPSHDIAHWDLQPTMTLRARLIGTQDLQAGDTVGYGSRFTAEAPMRIGVVACGYADGYPRHAPSGTPVLVDGVRTRLVGRVSMDMVTVDLGGLPQAARGSEVTLWGRASSGAVLPIDEVAHAAGTVGYEPMCALAARVPVRLDAAG</sequence>
<reference key="1">
    <citation type="journal article" date="2007" name="J. Bacteriol.">
        <title>Whole-genome analysis of the methyl tert-butyl ether-degrading beta-proteobacterium Methylibium petroleiphilum PM1.</title>
        <authorList>
            <person name="Kane S.R."/>
            <person name="Chakicherla A.Y."/>
            <person name="Chain P.S.G."/>
            <person name="Schmidt R."/>
            <person name="Shin M.W."/>
            <person name="Legler T.C."/>
            <person name="Scow K.M."/>
            <person name="Larimer F.W."/>
            <person name="Lucas S.M."/>
            <person name="Richardson P.M."/>
            <person name="Hristova K.R."/>
        </authorList>
    </citation>
    <scope>NUCLEOTIDE SEQUENCE [LARGE SCALE GENOMIC DNA]</scope>
    <source>
        <strain>ATCC BAA-1232 / LMG 22953 / PM1</strain>
    </source>
</reference>
<feature type="chain" id="PRO_1000066010" description="Alanine racemase">
    <location>
        <begin position="1"/>
        <end position="367"/>
    </location>
</feature>
<feature type="active site" description="Proton acceptor; specific for D-alanine" evidence="1">
    <location>
        <position position="35"/>
    </location>
</feature>
<feature type="active site" description="Proton acceptor; specific for L-alanine" evidence="1">
    <location>
        <position position="256"/>
    </location>
</feature>
<feature type="binding site" evidence="1">
    <location>
        <position position="130"/>
    </location>
    <ligand>
        <name>substrate</name>
    </ligand>
</feature>
<feature type="binding site" evidence="1">
    <location>
        <position position="304"/>
    </location>
    <ligand>
        <name>substrate</name>
    </ligand>
</feature>
<feature type="modified residue" description="N6-(pyridoxal phosphate)lysine" evidence="1">
    <location>
        <position position="35"/>
    </location>
</feature>
<comment type="function">
    <text evidence="1">Catalyzes the interconversion of L-alanine and D-alanine. May also act on other amino acids.</text>
</comment>
<comment type="catalytic activity">
    <reaction evidence="1">
        <text>L-alanine = D-alanine</text>
        <dbReference type="Rhea" id="RHEA:20249"/>
        <dbReference type="ChEBI" id="CHEBI:57416"/>
        <dbReference type="ChEBI" id="CHEBI:57972"/>
        <dbReference type="EC" id="5.1.1.1"/>
    </reaction>
</comment>
<comment type="cofactor">
    <cofactor evidence="1">
        <name>pyridoxal 5'-phosphate</name>
        <dbReference type="ChEBI" id="CHEBI:597326"/>
    </cofactor>
</comment>
<comment type="pathway">
    <text evidence="1">Amino-acid biosynthesis; D-alanine biosynthesis; D-alanine from L-alanine: step 1/1.</text>
</comment>
<comment type="similarity">
    <text evidence="1">Belongs to the alanine racemase family.</text>
</comment>
<gene>
    <name type="primary">alr</name>
    <name type="ordered locus">Mpe_A3562</name>
</gene>